<keyword id="KW-0067">ATP-binding</keyword>
<keyword id="KW-0460">Magnesium</keyword>
<keyword id="KW-0464">Manganese</keyword>
<keyword id="KW-0479">Metal-binding</keyword>
<keyword id="KW-0547">Nucleotide-binding</keyword>
<keyword id="KW-0548">Nucleotidyltransferase</keyword>
<keyword id="KW-0808">Transferase</keyword>
<gene>
    <name evidence="1" type="primary">ydiU</name>
    <name evidence="1" type="synonym">selO</name>
    <name type="ordered locus">BCE33L3222</name>
</gene>
<feature type="chain" id="PRO_0000271807" description="Protein nucleotidyltransferase YdiU">
    <location>
        <begin position="1"/>
        <end position="488"/>
    </location>
</feature>
<feature type="active site" description="Proton acceptor" evidence="1">
    <location>
        <position position="253"/>
    </location>
</feature>
<feature type="binding site" evidence="1">
    <location>
        <position position="91"/>
    </location>
    <ligand>
        <name>ATP</name>
        <dbReference type="ChEBI" id="CHEBI:30616"/>
    </ligand>
</feature>
<feature type="binding site" evidence="1">
    <location>
        <position position="93"/>
    </location>
    <ligand>
        <name>ATP</name>
        <dbReference type="ChEBI" id="CHEBI:30616"/>
    </ligand>
</feature>
<feature type="binding site" evidence="1">
    <location>
        <position position="94"/>
    </location>
    <ligand>
        <name>ATP</name>
        <dbReference type="ChEBI" id="CHEBI:30616"/>
    </ligand>
</feature>
<feature type="binding site" evidence="1">
    <location>
        <position position="114"/>
    </location>
    <ligand>
        <name>ATP</name>
        <dbReference type="ChEBI" id="CHEBI:30616"/>
    </ligand>
</feature>
<feature type="binding site" evidence="1">
    <location>
        <position position="126"/>
    </location>
    <ligand>
        <name>ATP</name>
        <dbReference type="ChEBI" id="CHEBI:30616"/>
    </ligand>
</feature>
<feature type="binding site" evidence="1">
    <location>
        <position position="127"/>
    </location>
    <ligand>
        <name>ATP</name>
        <dbReference type="ChEBI" id="CHEBI:30616"/>
    </ligand>
</feature>
<feature type="binding site" evidence="1">
    <location>
        <position position="177"/>
    </location>
    <ligand>
        <name>ATP</name>
        <dbReference type="ChEBI" id="CHEBI:30616"/>
    </ligand>
</feature>
<feature type="binding site" evidence="1">
    <location>
        <position position="184"/>
    </location>
    <ligand>
        <name>ATP</name>
        <dbReference type="ChEBI" id="CHEBI:30616"/>
    </ligand>
</feature>
<feature type="binding site" evidence="1">
    <location>
        <position position="254"/>
    </location>
    <ligand>
        <name>Mg(2+)</name>
        <dbReference type="ChEBI" id="CHEBI:18420"/>
    </ligand>
</feature>
<feature type="binding site" evidence="1">
    <location>
        <position position="263"/>
    </location>
    <ligand>
        <name>ATP</name>
        <dbReference type="ChEBI" id="CHEBI:30616"/>
    </ligand>
</feature>
<feature type="binding site" evidence="1">
    <location>
        <position position="263"/>
    </location>
    <ligand>
        <name>Mg(2+)</name>
        <dbReference type="ChEBI" id="CHEBI:18420"/>
    </ligand>
</feature>
<name>SELO_BACCZ</name>
<organism>
    <name type="scientific">Bacillus cereus (strain ZK / E33L)</name>
    <dbReference type="NCBI Taxonomy" id="288681"/>
    <lineage>
        <taxon>Bacteria</taxon>
        <taxon>Bacillati</taxon>
        <taxon>Bacillota</taxon>
        <taxon>Bacilli</taxon>
        <taxon>Bacillales</taxon>
        <taxon>Bacillaceae</taxon>
        <taxon>Bacillus</taxon>
        <taxon>Bacillus cereus group</taxon>
    </lineage>
</organism>
<evidence type="ECO:0000255" key="1">
    <source>
        <dbReference type="HAMAP-Rule" id="MF_00692"/>
    </source>
</evidence>
<sequence length="488" mass="55007">MTKNNEAGWNLDHSYTTLPQSFYTEIPPTPVSSPELVKLNHSLAISLGFHPEELKKEAEIAIFAGNALPEGAHPLAQAYAGHQFGHFNMLGDGRALLIGEQITPSGKRFDIQLKGSGPTPYSRRGDGRAALGPMLREYIISEAMYALDIPTTRSLAVVTTGEPTYRETKLPGAILTRVASSHIRVGTFQYAAARGSIEDLQSLADYTIKRHYPEIEAHENRYTALLQEVIKKQASLIAKWQLVGFIHGVMNTDNITISGETIDYGPCAFMDNYDQGTVFSSIDTQGRYAYGNQPYMAAWDLARLAESLIPILHEDEEEALKIAQDEISKFSVQYENQWFLGMKKKLGLFSNEEQDQSLIEQLLKMMEKFKADYTNTFRSLTLNTIENTALFESPEFKEWYKLWQSRLERQEESKENAYEMMKNNNPSIIPRNHRVEEALEAAVTSGDYSVMEKLLEALSNPYAYSADQEDYCAPPAPTNRPYRTFCGT</sequence>
<reference key="1">
    <citation type="journal article" date="2006" name="J. Bacteriol.">
        <title>Pathogenomic sequence analysis of Bacillus cereus and Bacillus thuringiensis isolates closely related to Bacillus anthracis.</title>
        <authorList>
            <person name="Han C.S."/>
            <person name="Xie G."/>
            <person name="Challacombe J.F."/>
            <person name="Altherr M.R."/>
            <person name="Bhotika S.S."/>
            <person name="Bruce D."/>
            <person name="Campbell C.S."/>
            <person name="Campbell M.L."/>
            <person name="Chen J."/>
            <person name="Chertkov O."/>
            <person name="Cleland C."/>
            <person name="Dimitrijevic M."/>
            <person name="Doggett N.A."/>
            <person name="Fawcett J.J."/>
            <person name="Glavina T."/>
            <person name="Goodwin L.A."/>
            <person name="Hill K.K."/>
            <person name="Hitchcock P."/>
            <person name="Jackson P.J."/>
            <person name="Keim P."/>
            <person name="Kewalramani A.R."/>
            <person name="Longmire J."/>
            <person name="Lucas S."/>
            <person name="Malfatti S."/>
            <person name="McMurry K."/>
            <person name="Meincke L.J."/>
            <person name="Misra M."/>
            <person name="Moseman B.L."/>
            <person name="Mundt M."/>
            <person name="Munk A.C."/>
            <person name="Okinaka R.T."/>
            <person name="Parson-Quintana B."/>
            <person name="Reilly L.P."/>
            <person name="Richardson P."/>
            <person name="Robinson D.L."/>
            <person name="Rubin E."/>
            <person name="Saunders E."/>
            <person name="Tapia R."/>
            <person name="Tesmer J.G."/>
            <person name="Thayer N."/>
            <person name="Thompson L.S."/>
            <person name="Tice H."/>
            <person name="Ticknor L.O."/>
            <person name="Wills P.L."/>
            <person name="Brettin T.S."/>
            <person name="Gilna P."/>
        </authorList>
    </citation>
    <scope>NUCLEOTIDE SEQUENCE [LARGE SCALE GENOMIC DNA]</scope>
    <source>
        <strain>ZK / E33L</strain>
    </source>
</reference>
<protein>
    <recommendedName>
        <fullName evidence="1">Protein nucleotidyltransferase YdiU</fullName>
        <ecNumber evidence="1">2.7.7.-</ecNumber>
    </recommendedName>
    <alternativeName>
        <fullName evidence="1">Protein adenylyltransferase YdiU</fullName>
        <ecNumber evidence="1">2.7.7.108</ecNumber>
    </alternativeName>
    <alternativeName>
        <fullName evidence="1">Protein uridylyltransferase YdiU</fullName>
        <ecNumber evidence="1">2.7.7.-</ecNumber>
    </alternativeName>
</protein>
<comment type="function">
    <text evidence="1">Nucleotidyltransferase involved in the post-translational modification of proteins. It can catalyze the addition of adenosine monophosphate (AMP) or uridine monophosphate (UMP) to a protein, resulting in modifications known as AMPylation and UMPylation.</text>
</comment>
<comment type="catalytic activity">
    <reaction evidence="1">
        <text>L-seryl-[protein] + ATP = 3-O-(5'-adenylyl)-L-seryl-[protein] + diphosphate</text>
        <dbReference type="Rhea" id="RHEA:58120"/>
        <dbReference type="Rhea" id="RHEA-COMP:9863"/>
        <dbReference type="Rhea" id="RHEA-COMP:15073"/>
        <dbReference type="ChEBI" id="CHEBI:29999"/>
        <dbReference type="ChEBI" id="CHEBI:30616"/>
        <dbReference type="ChEBI" id="CHEBI:33019"/>
        <dbReference type="ChEBI" id="CHEBI:142516"/>
        <dbReference type="EC" id="2.7.7.108"/>
    </reaction>
</comment>
<comment type="catalytic activity">
    <reaction evidence="1">
        <text>L-threonyl-[protein] + ATP = 3-O-(5'-adenylyl)-L-threonyl-[protein] + diphosphate</text>
        <dbReference type="Rhea" id="RHEA:54292"/>
        <dbReference type="Rhea" id="RHEA-COMP:11060"/>
        <dbReference type="Rhea" id="RHEA-COMP:13847"/>
        <dbReference type="ChEBI" id="CHEBI:30013"/>
        <dbReference type="ChEBI" id="CHEBI:30616"/>
        <dbReference type="ChEBI" id="CHEBI:33019"/>
        <dbReference type="ChEBI" id="CHEBI:138113"/>
        <dbReference type="EC" id="2.7.7.108"/>
    </reaction>
</comment>
<comment type="catalytic activity">
    <reaction evidence="1">
        <text>L-tyrosyl-[protein] + ATP = O-(5'-adenylyl)-L-tyrosyl-[protein] + diphosphate</text>
        <dbReference type="Rhea" id="RHEA:54288"/>
        <dbReference type="Rhea" id="RHEA-COMP:10136"/>
        <dbReference type="Rhea" id="RHEA-COMP:13846"/>
        <dbReference type="ChEBI" id="CHEBI:30616"/>
        <dbReference type="ChEBI" id="CHEBI:33019"/>
        <dbReference type="ChEBI" id="CHEBI:46858"/>
        <dbReference type="ChEBI" id="CHEBI:83624"/>
        <dbReference type="EC" id="2.7.7.108"/>
    </reaction>
</comment>
<comment type="catalytic activity">
    <reaction evidence="1">
        <text>L-histidyl-[protein] + UTP = N(tele)-(5'-uridylyl)-L-histidyl-[protein] + diphosphate</text>
        <dbReference type="Rhea" id="RHEA:83891"/>
        <dbReference type="Rhea" id="RHEA-COMP:9745"/>
        <dbReference type="Rhea" id="RHEA-COMP:20239"/>
        <dbReference type="ChEBI" id="CHEBI:29979"/>
        <dbReference type="ChEBI" id="CHEBI:33019"/>
        <dbReference type="ChEBI" id="CHEBI:46398"/>
        <dbReference type="ChEBI" id="CHEBI:233474"/>
    </reaction>
</comment>
<comment type="catalytic activity">
    <reaction evidence="1">
        <text>L-seryl-[protein] + UTP = O-(5'-uridylyl)-L-seryl-[protein] + diphosphate</text>
        <dbReference type="Rhea" id="RHEA:64604"/>
        <dbReference type="Rhea" id="RHEA-COMP:9863"/>
        <dbReference type="Rhea" id="RHEA-COMP:16635"/>
        <dbReference type="ChEBI" id="CHEBI:29999"/>
        <dbReference type="ChEBI" id="CHEBI:33019"/>
        <dbReference type="ChEBI" id="CHEBI:46398"/>
        <dbReference type="ChEBI" id="CHEBI:156051"/>
    </reaction>
</comment>
<comment type="catalytic activity">
    <reaction evidence="1">
        <text>L-tyrosyl-[protein] + UTP = O-(5'-uridylyl)-L-tyrosyl-[protein] + diphosphate</text>
        <dbReference type="Rhea" id="RHEA:83887"/>
        <dbReference type="Rhea" id="RHEA-COMP:10136"/>
        <dbReference type="Rhea" id="RHEA-COMP:20238"/>
        <dbReference type="ChEBI" id="CHEBI:33019"/>
        <dbReference type="ChEBI" id="CHEBI:46398"/>
        <dbReference type="ChEBI" id="CHEBI:46858"/>
        <dbReference type="ChEBI" id="CHEBI:90602"/>
    </reaction>
</comment>
<comment type="cofactor">
    <cofactor evidence="1">
        <name>Mg(2+)</name>
        <dbReference type="ChEBI" id="CHEBI:18420"/>
    </cofactor>
    <cofactor evidence="1">
        <name>Mn(2+)</name>
        <dbReference type="ChEBI" id="CHEBI:29035"/>
    </cofactor>
</comment>
<comment type="similarity">
    <text evidence="1">Belongs to the SELO family.</text>
</comment>
<proteinExistence type="inferred from homology"/>
<dbReference type="EC" id="2.7.7.-" evidence="1"/>
<dbReference type="EC" id="2.7.7.108" evidence="1"/>
<dbReference type="EMBL" id="CP000001">
    <property type="protein sequence ID" value="AAU17040.1"/>
    <property type="molecule type" value="Genomic_DNA"/>
</dbReference>
<dbReference type="RefSeq" id="WP_000164878.1">
    <property type="nucleotide sequence ID" value="NC_006274.1"/>
</dbReference>
<dbReference type="SMR" id="Q637V9"/>
<dbReference type="KEGG" id="bcz:BCE33L3222"/>
<dbReference type="PATRIC" id="fig|288681.22.peg.2209"/>
<dbReference type="Proteomes" id="UP000002612">
    <property type="component" value="Chromosome"/>
</dbReference>
<dbReference type="GO" id="GO:0070733">
    <property type="term" value="F:AMPylase activity"/>
    <property type="evidence" value="ECO:0007669"/>
    <property type="project" value="RHEA"/>
</dbReference>
<dbReference type="GO" id="GO:0005524">
    <property type="term" value="F:ATP binding"/>
    <property type="evidence" value="ECO:0007669"/>
    <property type="project" value="UniProtKB-UniRule"/>
</dbReference>
<dbReference type="GO" id="GO:0000287">
    <property type="term" value="F:magnesium ion binding"/>
    <property type="evidence" value="ECO:0007669"/>
    <property type="project" value="UniProtKB-UniRule"/>
</dbReference>
<dbReference type="HAMAP" id="MF_00692">
    <property type="entry name" value="YdiU_SelO"/>
    <property type="match status" value="1"/>
</dbReference>
<dbReference type="InterPro" id="IPR003846">
    <property type="entry name" value="SelO"/>
</dbReference>
<dbReference type="NCBIfam" id="NF000658">
    <property type="entry name" value="PRK00029.1"/>
    <property type="match status" value="1"/>
</dbReference>
<dbReference type="PANTHER" id="PTHR32057">
    <property type="entry name" value="PROTEIN ADENYLYLTRANSFERASE SELO, MITOCHONDRIAL"/>
    <property type="match status" value="1"/>
</dbReference>
<dbReference type="PANTHER" id="PTHR32057:SF14">
    <property type="entry name" value="PROTEIN ADENYLYLTRANSFERASE SELO, MITOCHONDRIAL"/>
    <property type="match status" value="1"/>
</dbReference>
<dbReference type="Pfam" id="PF02696">
    <property type="entry name" value="SelO"/>
    <property type="match status" value="1"/>
</dbReference>
<accession>Q637V9</accession>